<name>DPB2_CRYNJ</name>
<feature type="chain" id="PRO_0000071568" description="DNA polymerase epsilon subunit B">
    <location>
        <begin position="1"/>
        <end position="541"/>
    </location>
</feature>
<keyword id="KW-0235">DNA replication</keyword>
<keyword id="KW-0238">DNA-binding</keyword>
<keyword id="KW-0539">Nucleus</keyword>
<keyword id="KW-1185">Reference proteome</keyword>
<sequence length="541" mass="61072">MVNQMRSAIVKVFSTKHSLTLPAPALHYIEEVLIENEIPEDEWMVGLEFWAKEYLKAEDSSSLVSLQALKKAYENLQLGTTEDTQVADPSEVNVESHFSVVDSFDMPAMRYDPVRSGFVQSKAQPSVAGQASSRSAFLRERWAIIKEIILRNENFTPPAIGGHDRANYLKLTSIRNLLGRAGQLFLLFGMLARNEEGKLCLEDGESRVVLDMEDAVPGEGLFTEGCMVLIEGEYTVEETVRVLAMGHPPSERRNIARSLHGHVDFLGGGAVSLKEEQKYNPTVLANTQISFVILSDVWLDHPRTMPALRQMFEGYANTAEYRPMVFVLCGNFCQGGWEGQEGLKRYSRGFNSLAELLQSIPLLHSSHFVFVPGPSDPWSSTTLPRPSLPSAFTTRLSNRIPNARFVSNPCRLKYFGMEIVICREDLMGKMMRNLVVVKEGEEMNMKRYLVQTILDQAHLSPLPISVRPTLWEYDHALRLYPMPSAVVLADKYERYELTYEGCHVFNPGKFVGGIGEDGWEFEWSMYYPATGRSERSVLTME</sequence>
<dbReference type="EMBL" id="AE017346">
    <property type="protein sequence ID" value="AAW44369.1"/>
    <property type="molecule type" value="Genomic_DNA"/>
</dbReference>
<dbReference type="RefSeq" id="XP_571676.1">
    <property type="nucleotide sequence ID" value="XM_571676.1"/>
</dbReference>
<dbReference type="SMR" id="P0CN24"/>
<dbReference type="FunCoup" id="P0CN24">
    <property type="interactions" value="347"/>
</dbReference>
<dbReference type="STRING" id="214684.P0CN24"/>
<dbReference type="PaxDb" id="214684-P0CN24"/>
<dbReference type="EnsemblFungi" id="AAW44369">
    <property type="protein sequence ID" value="AAW44369"/>
    <property type="gene ID" value="CNF03830"/>
</dbReference>
<dbReference type="GeneID" id="3258219"/>
<dbReference type="KEGG" id="cne:CNF03830"/>
<dbReference type="VEuPathDB" id="FungiDB:CNF03830"/>
<dbReference type="eggNOG" id="KOG3818">
    <property type="taxonomic scope" value="Eukaryota"/>
</dbReference>
<dbReference type="HOGENOM" id="CLU_010628_2_1_1"/>
<dbReference type="InParanoid" id="P0CN24"/>
<dbReference type="OMA" id="FFCEGCF"/>
<dbReference type="OrthoDB" id="10254730at2759"/>
<dbReference type="Proteomes" id="UP000002149">
    <property type="component" value="Chromosome 6"/>
</dbReference>
<dbReference type="GO" id="GO:0000785">
    <property type="term" value="C:chromatin"/>
    <property type="evidence" value="ECO:0007669"/>
    <property type="project" value="EnsemblFungi"/>
</dbReference>
<dbReference type="GO" id="GO:0008622">
    <property type="term" value="C:epsilon DNA polymerase complex"/>
    <property type="evidence" value="ECO:0000318"/>
    <property type="project" value="GO_Central"/>
</dbReference>
<dbReference type="GO" id="GO:0003677">
    <property type="term" value="F:DNA binding"/>
    <property type="evidence" value="ECO:0007669"/>
    <property type="project" value="UniProtKB-KW"/>
</dbReference>
<dbReference type="GO" id="GO:0140529">
    <property type="term" value="P:CMG complex assembly"/>
    <property type="evidence" value="ECO:0007669"/>
    <property type="project" value="EnsemblFungi"/>
</dbReference>
<dbReference type="GO" id="GO:0006261">
    <property type="term" value="P:DNA-templated DNA replication"/>
    <property type="evidence" value="ECO:0000318"/>
    <property type="project" value="GO_Central"/>
</dbReference>
<dbReference type="GO" id="GO:0042276">
    <property type="term" value="P:error-prone translesion synthesis"/>
    <property type="evidence" value="ECO:0000318"/>
    <property type="project" value="GO_Central"/>
</dbReference>
<dbReference type="FunFam" id="3.60.21.50:FF:000010">
    <property type="entry name" value="DNA polymerase epsilon subunit"/>
    <property type="match status" value="1"/>
</dbReference>
<dbReference type="Gene3D" id="3.60.21.50">
    <property type="match status" value="1"/>
</dbReference>
<dbReference type="InterPro" id="IPR007185">
    <property type="entry name" value="DNA_pol_a/d/e_bsu"/>
</dbReference>
<dbReference type="InterPro" id="IPR016266">
    <property type="entry name" value="POLE2"/>
</dbReference>
<dbReference type="PANTHER" id="PTHR12708:SF0">
    <property type="entry name" value="DNA POLYMERASE EPSILON SUBUNIT 2"/>
    <property type="match status" value="1"/>
</dbReference>
<dbReference type="PANTHER" id="PTHR12708">
    <property type="entry name" value="DNA POLYMERASE EPSILON SUBUNIT B"/>
    <property type="match status" value="1"/>
</dbReference>
<dbReference type="Pfam" id="PF04042">
    <property type="entry name" value="DNA_pol_E_B"/>
    <property type="match status" value="1"/>
</dbReference>
<dbReference type="PIRSF" id="PIRSF000799">
    <property type="entry name" value="DNA_pol_eps_2"/>
    <property type="match status" value="1"/>
</dbReference>
<evidence type="ECO:0000250" key="1"/>
<evidence type="ECO:0000250" key="2">
    <source>
        <dbReference type="UniProtKB" id="P24482"/>
    </source>
</evidence>
<evidence type="ECO:0000305" key="3"/>
<organism>
    <name type="scientific">Cryptococcus neoformans var. neoformans serotype D (strain JEC21 / ATCC MYA-565)</name>
    <name type="common">Filobasidiella neoformans</name>
    <dbReference type="NCBI Taxonomy" id="214684"/>
    <lineage>
        <taxon>Eukaryota</taxon>
        <taxon>Fungi</taxon>
        <taxon>Dikarya</taxon>
        <taxon>Basidiomycota</taxon>
        <taxon>Agaricomycotina</taxon>
        <taxon>Tremellomycetes</taxon>
        <taxon>Tremellales</taxon>
        <taxon>Cryptococcaceae</taxon>
        <taxon>Cryptococcus</taxon>
        <taxon>Cryptococcus neoformans species complex</taxon>
    </lineage>
</organism>
<protein>
    <recommendedName>
        <fullName>DNA polymerase epsilon subunit B</fullName>
    </recommendedName>
    <alternativeName>
        <fullName>DNA polymerase II subunit 2</fullName>
    </alternativeName>
</protein>
<proteinExistence type="inferred from homology"/>
<accession>P0CN24</accession>
<accession>Q55R91</accession>
<accession>Q5KEX9</accession>
<gene>
    <name type="primary">DPB2</name>
    <name type="ordered locus">CNF03830</name>
</gene>
<reference key="1">
    <citation type="journal article" date="2005" name="Science">
        <title>The genome of the basidiomycetous yeast and human pathogen Cryptococcus neoformans.</title>
        <authorList>
            <person name="Loftus B.J."/>
            <person name="Fung E."/>
            <person name="Roncaglia P."/>
            <person name="Rowley D."/>
            <person name="Amedeo P."/>
            <person name="Bruno D."/>
            <person name="Vamathevan J."/>
            <person name="Miranda M."/>
            <person name="Anderson I.J."/>
            <person name="Fraser J.A."/>
            <person name="Allen J.E."/>
            <person name="Bosdet I.E."/>
            <person name="Brent M.R."/>
            <person name="Chiu R."/>
            <person name="Doering T.L."/>
            <person name="Donlin M.J."/>
            <person name="D'Souza C.A."/>
            <person name="Fox D.S."/>
            <person name="Grinberg V."/>
            <person name="Fu J."/>
            <person name="Fukushima M."/>
            <person name="Haas B.J."/>
            <person name="Huang J.C."/>
            <person name="Janbon G."/>
            <person name="Jones S.J.M."/>
            <person name="Koo H.L."/>
            <person name="Krzywinski M.I."/>
            <person name="Kwon-Chung K.J."/>
            <person name="Lengeler K.B."/>
            <person name="Maiti R."/>
            <person name="Marra M.A."/>
            <person name="Marra R.E."/>
            <person name="Mathewson C.A."/>
            <person name="Mitchell T.G."/>
            <person name="Pertea M."/>
            <person name="Riggs F.R."/>
            <person name="Salzberg S.L."/>
            <person name="Schein J.E."/>
            <person name="Shvartsbeyn A."/>
            <person name="Shin H."/>
            <person name="Shumway M."/>
            <person name="Specht C.A."/>
            <person name="Suh B.B."/>
            <person name="Tenney A."/>
            <person name="Utterback T.R."/>
            <person name="Wickes B.L."/>
            <person name="Wortman J.R."/>
            <person name="Wye N.H."/>
            <person name="Kronstad J.W."/>
            <person name="Lodge J.K."/>
            <person name="Heitman J."/>
            <person name="Davis R.W."/>
            <person name="Fraser C.M."/>
            <person name="Hyman R.W."/>
        </authorList>
    </citation>
    <scope>NUCLEOTIDE SEQUENCE [LARGE SCALE GENOMIC DNA]</scope>
    <source>
        <strain>JEC21 / ATCC MYA-565</strain>
    </source>
</reference>
<comment type="function">
    <text evidence="2">As accessory component of the DNA polymerase epsilon (DNA polymerase II) participates in chromosomal DNA replication.</text>
</comment>
<comment type="subunit">
    <text evidence="1">Heterotetramer. Consists of four subunits: POL2, DPB2, DPB3 and DPB4 (By similarity).</text>
</comment>
<comment type="subcellular location">
    <subcellularLocation>
        <location evidence="1">Nucleus</location>
    </subcellularLocation>
</comment>
<comment type="miscellaneous">
    <text>In eukaryotes there are five DNA polymerases: alpha, beta, gamma, delta, and epsilon which are responsible for different reactions of DNA synthesis.</text>
</comment>
<comment type="similarity">
    <text evidence="3">Belongs to the DNA polymerase epsilon subunit B family.</text>
</comment>